<proteinExistence type="inferred from homology"/>
<reference key="1">
    <citation type="journal article" date="2005" name="Proc. Natl. Acad. Sci. U.S.A.">
        <title>Complete genome sequence of the probiotic lactic acid bacterium Lactobacillus acidophilus NCFM.</title>
        <authorList>
            <person name="Altermann E."/>
            <person name="Russell W.M."/>
            <person name="Azcarate-Peril M.A."/>
            <person name="Barrangou R."/>
            <person name="Buck B.L."/>
            <person name="McAuliffe O."/>
            <person name="Souther N."/>
            <person name="Dobson A."/>
            <person name="Duong T."/>
            <person name="Callanan M."/>
            <person name="Lick S."/>
            <person name="Hamrick A."/>
            <person name="Cano R."/>
            <person name="Klaenhammer T.R."/>
        </authorList>
    </citation>
    <scope>NUCLEOTIDE SEQUENCE [LARGE SCALE GENOMIC DNA]</scope>
    <source>
        <strain>ATCC 700396 / NCK56 / N2 / NCFM</strain>
    </source>
</reference>
<sequence length="96" mass="10219">MNILGMKLFAHHKGGGSTANGRNSAGRRLGAKAGDGQEIHAGSIIYRQRGTKIHPGKNVGQGGDDTLFALVNGVVKFERLGKYKKQVSVYPAEEAK</sequence>
<protein>
    <recommendedName>
        <fullName evidence="1">Large ribosomal subunit protein bL27</fullName>
    </recommendedName>
    <alternativeName>
        <fullName evidence="3">50S ribosomal protein L27</fullName>
    </alternativeName>
</protein>
<name>RL27_LACAC</name>
<evidence type="ECO:0000255" key="1">
    <source>
        <dbReference type="HAMAP-Rule" id="MF_00539"/>
    </source>
</evidence>
<evidence type="ECO:0000256" key="2">
    <source>
        <dbReference type="SAM" id="MobiDB-lite"/>
    </source>
</evidence>
<evidence type="ECO:0000305" key="3"/>
<accession>Q5FJG0</accession>
<gene>
    <name evidence="1" type="primary">rpmA</name>
    <name type="ordered locus">LBA1337</name>
</gene>
<keyword id="KW-1185">Reference proteome</keyword>
<keyword id="KW-0687">Ribonucleoprotein</keyword>
<keyword id="KW-0689">Ribosomal protein</keyword>
<feature type="chain" id="PRO_0000181102" description="Large ribosomal subunit protein bL27">
    <location>
        <begin position="1"/>
        <end position="96"/>
    </location>
</feature>
<feature type="region of interest" description="Disordered" evidence="2">
    <location>
        <begin position="13"/>
        <end position="33"/>
    </location>
</feature>
<dbReference type="EMBL" id="CP000033">
    <property type="protein sequence ID" value="AAV43164.1"/>
    <property type="molecule type" value="Genomic_DNA"/>
</dbReference>
<dbReference type="RefSeq" id="WP_011254420.1">
    <property type="nucleotide sequence ID" value="NC_006814.3"/>
</dbReference>
<dbReference type="RefSeq" id="YP_194195.1">
    <property type="nucleotide sequence ID" value="NC_006814.3"/>
</dbReference>
<dbReference type="SMR" id="Q5FJG0"/>
<dbReference type="STRING" id="272621.LBA1337"/>
<dbReference type="GeneID" id="93289580"/>
<dbReference type="KEGG" id="lac:LBA1337"/>
<dbReference type="PATRIC" id="fig|272621.13.peg.1265"/>
<dbReference type="eggNOG" id="COG0211">
    <property type="taxonomic scope" value="Bacteria"/>
</dbReference>
<dbReference type="HOGENOM" id="CLU_095424_4_0_9"/>
<dbReference type="OrthoDB" id="9803474at2"/>
<dbReference type="BioCyc" id="LACI272621:G1G49-1314-MONOMER"/>
<dbReference type="Proteomes" id="UP000006381">
    <property type="component" value="Chromosome"/>
</dbReference>
<dbReference type="GO" id="GO:0022625">
    <property type="term" value="C:cytosolic large ribosomal subunit"/>
    <property type="evidence" value="ECO:0007669"/>
    <property type="project" value="TreeGrafter"/>
</dbReference>
<dbReference type="GO" id="GO:0003735">
    <property type="term" value="F:structural constituent of ribosome"/>
    <property type="evidence" value="ECO:0007669"/>
    <property type="project" value="InterPro"/>
</dbReference>
<dbReference type="GO" id="GO:0006412">
    <property type="term" value="P:translation"/>
    <property type="evidence" value="ECO:0007669"/>
    <property type="project" value="UniProtKB-UniRule"/>
</dbReference>
<dbReference type="FunFam" id="2.40.50.100:FF:000004">
    <property type="entry name" value="50S ribosomal protein L27"/>
    <property type="match status" value="1"/>
</dbReference>
<dbReference type="Gene3D" id="2.40.50.100">
    <property type="match status" value="1"/>
</dbReference>
<dbReference type="HAMAP" id="MF_00539">
    <property type="entry name" value="Ribosomal_bL27"/>
    <property type="match status" value="1"/>
</dbReference>
<dbReference type="InterPro" id="IPR001684">
    <property type="entry name" value="Ribosomal_bL27"/>
</dbReference>
<dbReference type="InterPro" id="IPR018261">
    <property type="entry name" value="Ribosomal_bL27_CS"/>
</dbReference>
<dbReference type="NCBIfam" id="TIGR00062">
    <property type="entry name" value="L27"/>
    <property type="match status" value="1"/>
</dbReference>
<dbReference type="PANTHER" id="PTHR15893:SF0">
    <property type="entry name" value="LARGE RIBOSOMAL SUBUNIT PROTEIN BL27M"/>
    <property type="match status" value="1"/>
</dbReference>
<dbReference type="PANTHER" id="PTHR15893">
    <property type="entry name" value="RIBOSOMAL PROTEIN L27"/>
    <property type="match status" value="1"/>
</dbReference>
<dbReference type="Pfam" id="PF01016">
    <property type="entry name" value="Ribosomal_L27"/>
    <property type="match status" value="1"/>
</dbReference>
<dbReference type="PRINTS" id="PR00063">
    <property type="entry name" value="RIBOSOMALL27"/>
</dbReference>
<dbReference type="SUPFAM" id="SSF110324">
    <property type="entry name" value="Ribosomal L27 protein-like"/>
    <property type="match status" value="1"/>
</dbReference>
<dbReference type="PROSITE" id="PS00831">
    <property type="entry name" value="RIBOSOMAL_L27"/>
    <property type="match status" value="1"/>
</dbReference>
<organism>
    <name type="scientific">Lactobacillus acidophilus (strain ATCC 700396 / NCK56 / N2 / NCFM)</name>
    <dbReference type="NCBI Taxonomy" id="272621"/>
    <lineage>
        <taxon>Bacteria</taxon>
        <taxon>Bacillati</taxon>
        <taxon>Bacillota</taxon>
        <taxon>Bacilli</taxon>
        <taxon>Lactobacillales</taxon>
        <taxon>Lactobacillaceae</taxon>
        <taxon>Lactobacillus</taxon>
    </lineage>
</organism>
<comment type="similarity">
    <text evidence="1">Belongs to the bacterial ribosomal protein bL27 family.</text>
</comment>